<organism>
    <name type="scientific">Homo sapiens</name>
    <name type="common">Human</name>
    <dbReference type="NCBI Taxonomy" id="9606"/>
    <lineage>
        <taxon>Eukaryota</taxon>
        <taxon>Metazoa</taxon>
        <taxon>Chordata</taxon>
        <taxon>Craniata</taxon>
        <taxon>Vertebrata</taxon>
        <taxon>Euteleostomi</taxon>
        <taxon>Mammalia</taxon>
        <taxon>Eutheria</taxon>
        <taxon>Euarchontoglires</taxon>
        <taxon>Primates</taxon>
        <taxon>Haplorrhini</taxon>
        <taxon>Catarrhini</taxon>
        <taxon>Hominidae</taxon>
        <taxon>Homo</taxon>
    </lineage>
</organism>
<keyword id="KW-1003">Cell membrane</keyword>
<keyword id="KW-0175">Coiled coil</keyword>
<keyword id="KW-0217">Developmental protein</keyword>
<keyword id="KW-0221">Differentiation</keyword>
<keyword id="KW-0333">Golgi apparatus</keyword>
<keyword id="KW-0472">Membrane</keyword>
<keyword id="KW-0517">Myogenesis</keyword>
<keyword id="KW-0597">Phosphoprotein</keyword>
<keyword id="KW-1267">Proteomics identification</keyword>
<keyword id="KW-1185">Reference proteome</keyword>
<keyword id="KW-0812">Transmembrane</keyword>
<keyword id="KW-1133">Transmembrane helix</keyword>
<reference key="1">
    <citation type="journal article" date="1998" name="Mol. Biol. Cell">
        <title>A novel synaptobrevin/VAMP homologous protein (VAMP5) is increased during in vitro myogenesis and present in the plasma membrane.</title>
        <authorList>
            <person name="Zeng Q."/>
            <person name="Subramaniam V.N."/>
            <person name="Wong S.H."/>
            <person name="Tang B.L."/>
            <person name="Parton R.G."/>
            <person name="Rea S."/>
            <person name="James D.E."/>
            <person name="Hong W."/>
        </authorList>
    </citation>
    <scope>NUCLEOTIDE SEQUENCE [MRNA]</scope>
</reference>
<reference key="2">
    <citation type="journal article" date="2000" name="Genome Res.">
        <title>Cloning and functional analysis of cDNAs with open reading frames for 300 previously undefined genes expressed in CD34+ hematopoietic stem/progenitor cells.</title>
        <authorList>
            <person name="Zhang Q.-H."/>
            <person name="Ye M."/>
            <person name="Wu X.-Y."/>
            <person name="Ren S.-X."/>
            <person name="Zhao M."/>
            <person name="Zhao C.-J."/>
            <person name="Fu G."/>
            <person name="Shen Y."/>
            <person name="Fan H.-Y."/>
            <person name="Lu G."/>
            <person name="Zhong M."/>
            <person name="Xu X.-R."/>
            <person name="Han Z.-G."/>
            <person name="Zhang J.-W."/>
            <person name="Tao J."/>
            <person name="Huang Q.-H."/>
            <person name="Zhou J."/>
            <person name="Hu G.-X."/>
            <person name="Gu J."/>
            <person name="Chen S.-J."/>
            <person name="Chen Z."/>
        </authorList>
    </citation>
    <scope>NUCLEOTIDE SEQUENCE [LARGE SCALE MRNA]</scope>
    <source>
        <tissue>Umbilical cord blood</tissue>
    </source>
</reference>
<reference key="3">
    <citation type="journal article" date="2004" name="Genome Res.">
        <title>The status, quality, and expansion of the NIH full-length cDNA project: the Mammalian Gene Collection (MGC).</title>
        <authorList>
            <consortium name="The MGC Project Team"/>
        </authorList>
    </citation>
    <scope>NUCLEOTIDE SEQUENCE [LARGE SCALE MRNA]</scope>
    <source>
        <tissue>Lung</tissue>
    </source>
</reference>
<reference key="4">
    <citation type="journal article" date="2009" name="Sci. Signal.">
        <title>Quantitative phosphoproteomic analysis of T cell receptor signaling reveals system-wide modulation of protein-protein interactions.</title>
        <authorList>
            <person name="Mayya V."/>
            <person name="Lundgren D.H."/>
            <person name="Hwang S.-I."/>
            <person name="Rezaul K."/>
            <person name="Wu L."/>
            <person name="Eng J.K."/>
            <person name="Rodionov V."/>
            <person name="Han D.K."/>
        </authorList>
    </citation>
    <scope>PHOSPHORYLATION [LARGE SCALE ANALYSIS] AT SER-48 AND SER-49</scope>
    <scope>IDENTIFICATION BY MASS SPECTROMETRY [LARGE SCALE ANALYSIS]</scope>
    <source>
        <tissue>Leukemic T-cell</tissue>
    </source>
</reference>
<reference key="5">
    <citation type="journal article" date="2017" name="Nat. Commun.">
        <title>Identification and characterization of a novel botulinum neurotoxin.</title>
        <authorList>
            <person name="Zhang S."/>
            <person name="Masuyer G."/>
            <person name="Zhang J."/>
            <person name="Shen Y."/>
            <person name="Lundin D."/>
            <person name="Henriksson L."/>
            <person name="Miyashita S.I."/>
            <person name="Martinez-Carranza M."/>
            <person name="Dong M."/>
            <person name="Stenmark P."/>
        </authorList>
    </citation>
    <scope>PROTEOLYTIC CLEAVAGE (MICROBIAL INFECTION) BY C.BOTULINUM NEUROTOXIN TYPE X</scope>
</reference>
<proteinExistence type="evidence at protein level"/>
<protein>
    <recommendedName>
        <fullName>Vesicle-associated membrane protein 5</fullName>
        <shortName>VAMP-5</shortName>
    </recommendedName>
    <alternativeName>
        <fullName>Myobrevin</fullName>
    </alternativeName>
</protein>
<sequence length="116" mass="12805">MAGIELERCQQQANEVTEIMRNNFGKVLERGVKLAELQQRSDQLLDMSSTFNKTTQNLAQKKCWENIRYRICVGLVVVGVLLIILIVLLVVFLPQSSDSSSAPRTQDAGIASGPGN</sequence>
<comment type="function">
    <text>May participate in trafficking events that are associated with myogenesis, such as myoblast fusion and/or GLUT4 trafficking.</text>
</comment>
<comment type="interaction">
    <interactant intactId="EBI-10191195">
        <id>O95183</id>
    </interactant>
    <interactant intactId="EBI-348517">
        <id>O95870</id>
        <label>ABHD16A</label>
    </interactant>
    <organismsDiffer>false</organismsDiffer>
    <experiments>3</experiments>
</comment>
<comment type="interaction">
    <interactant intactId="EBI-10191195">
        <id>O95183</id>
    </interactant>
    <interactant intactId="EBI-13059134">
        <id>Q13520</id>
        <label>AQP6</label>
    </interactant>
    <organismsDiffer>false</organismsDiffer>
    <experiments>3</experiments>
</comment>
<comment type="interaction">
    <interactant intactId="EBI-10191195">
        <id>O95183</id>
    </interactant>
    <interactant intactId="EBI-12808270">
        <id>P07307-3</id>
        <label>ASGR2</label>
    </interactant>
    <organismsDiffer>false</organismsDiffer>
    <experiments>3</experiments>
</comment>
<comment type="interaction">
    <interactant intactId="EBI-10191195">
        <id>O95183</id>
    </interactant>
    <interactant intactId="EBI-2512037">
        <id>O75787</id>
        <label>ATP6AP2</label>
    </interactant>
    <organismsDiffer>false</organismsDiffer>
    <experiments>3</experiments>
</comment>
<comment type="interaction">
    <interactant intactId="EBI-10191195">
        <id>O95183</id>
    </interactant>
    <interactant intactId="EBI-700794">
        <id>Q13323</id>
        <label>BIK</label>
    </interactant>
    <organismsDiffer>false</organismsDiffer>
    <experiments>3</experiments>
</comment>
<comment type="interaction">
    <interactant intactId="EBI-10191195">
        <id>O95183</id>
    </interactant>
    <interactant intactId="EBI-6657396">
        <id>P19397</id>
        <label>CD53</label>
    </interactant>
    <organismsDiffer>false</organismsDiffer>
    <experiments>3</experiments>
</comment>
<comment type="interaction">
    <interactant intactId="EBI-10191195">
        <id>O95183</id>
    </interactant>
    <interactant intactId="EBI-18400628">
        <id>O00501</id>
        <label>CLDN5</label>
    </interactant>
    <organismsDiffer>false</organismsDiffer>
    <experiments>3</experiments>
</comment>
<comment type="interaction">
    <interactant intactId="EBI-10191195">
        <id>O95183</id>
    </interactant>
    <interactant intactId="EBI-740744">
        <id>O95471</id>
        <label>CLDN7</label>
    </interactant>
    <organismsDiffer>false</organismsDiffer>
    <experiments>3</experiments>
</comment>
<comment type="interaction">
    <interactant intactId="EBI-10191195">
        <id>O95183</id>
    </interactant>
    <interactant intactId="EBI-372265">
        <id>P21964</id>
        <label>COMT</label>
    </interactant>
    <organismsDiffer>false</organismsDiffer>
    <experiments>3</experiments>
</comment>
<comment type="interaction">
    <interactant intactId="EBI-10191195">
        <id>O95183</id>
    </interactant>
    <interactant intactId="EBI-18013275">
        <id>Q7Z7G2</id>
        <label>CPLX4</label>
    </interactant>
    <organismsDiffer>false</organismsDiffer>
    <experiments>3</experiments>
</comment>
<comment type="interaction">
    <interactant intactId="EBI-10191195">
        <id>O95183</id>
    </interactant>
    <interactant intactId="EBI-286709">
        <id>P55060</id>
        <label>CSE1L</label>
    </interactant>
    <organismsDiffer>false</organismsDiffer>
    <experiments>2</experiments>
</comment>
<comment type="interaction">
    <interactant intactId="EBI-10191195">
        <id>O95183</id>
    </interactant>
    <interactant intactId="EBI-1046040">
        <id>P00387</id>
        <label>CYB5R3</label>
    </interactant>
    <organismsDiffer>false</organismsDiffer>
    <experiments>3</experiments>
</comment>
<comment type="interaction">
    <interactant intactId="EBI-10191195">
        <id>O95183</id>
    </interactant>
    <interactant intactId="EBI-18535450">
        <id>Q9GZR5</id>
        <label>ELOVL4</label>
    </interactant>
    <organismsDiffer>false</organismsDiffer>
    <experiments>3</experiments>
</comment>
<comment type="interaction">
    <interactant intactId="EBI-10191195">
        <id>O95183</id>
    </interactant>
    <interactant intactId="EBI-781551">
        <id>Q9Y282</id>
        <label>ERGIC3</label>
    </interactant>
    <organismsDiffer>false</organismsDiffer>
    <experiments>4</experiments>
</comment>
<comment type="interaction">
    <interactant intactId="EBI-10191195">
        <id>O95183</id>
    </interactant>
    <interactant intactId="EBI-17973325">
        <id>P60508</id>
        <label>ERVFRD-1</label>
    </interactant>
    <organismsDiffer>false</organismsDiffer>
    <experiments>3</experiments>
</comment>
<comment type="interaction">
    <interactant intactId="EBI-10191195">
        <id>O95183</id>
    </interactant>
    <interactant intactId="EBI-18304435">
        <id>Q5JX71</id>
        <label>FAM209A</label>
    </interactant>
    <organismsDiffer>false</organismsDiffer>
    <experiments>3</experiments>
</comment>
<comment type="interaction">
    <interactant intactId="EBI-10191195">
        <id>O95183</id>
    </interactant>
    <interactant intactId="EBI-12142257">
        <id>Q8TBE3</id>
        <label>FNDC9</label>
    </interactant>
    <organismsDiffer>false</organismsDiffer>
    <experiments>3</experiments>
</comment>
<comment type="interaction">
    <interactant intactId="EBI-10191195">
        <id>O95183</id>
    </interactant>
    <interactant intactId="EBI-17458373">
        <id>P48165</id>
        <label>GJA8</label>
    </interactant>
    <organismsDiffer>false</organismsDiffer>
    <experiments>3</experiments>
</comment>
<comment type="interaction">
    <interactant intactId="EBI-10191195">
        <id>O95183</id>
    </interactant>
    <interactant intactId="EBI-3917143">
        <id>Q5T7V8</id>
        <label>GORAB</label>
    </interactant>
    <organismsDiffer>false</organismsDiffer>
    <experiments>3</experiments>
</comment>
<comment type="interaction">
    <interactant intactId="EBI-10191195">
        <id>O95183</id>
    </interactant>
    <interactant intactId="EBI-13345167">
        <id>Q8TDT2</id>
        <label>GPR152</label>
    </interactant>
    <organismsDiffer>false</organismsDiffer>
    <experiments>3</experiments>
</comment>
<comment type="interaction">
    <interactant intactId="EBI-10191195">
        <id>O95183</id>
    </interactant>
    <interactant intactId="EBI-11721746">
        <id>Q8TED1</id>
        <label>GPX8</label>
    </interactant>
    <organismsDiffer>false</organismsDiffer>
    <experiments>3</experiments>
</comment>
<comment type="interaction">
    <interactant intactId="EBI-10191195">
        <id>O95183</id>
    </interactant>
    <interactant intactId="EBI-2832937">
        <id>Q96HH9</id>
        <label>GRAMD2B</label>
    </interactant>
    <organismsDiffer>false</organismsDiffer>
    <experiments>3</experiments>
</comment>
<comment type="interaction">
    <interactant intactId="EBI-10191195">
        <id>O95183</id>
    </interactant>
    <interactant intactId="EBI-11427100">
        <id>P31937</id>
        <label>HIBADH</label>
    </interactant>
    <organismsDiffer>false</organismsDiffer>
    <experiments>3</experiments>
</comment>
<comment type="interaction">
    <interactant intactId="EBI-10191195">
        <id>O95183</id>
    </interactant>
    <interactant intactId="EBI-1031656">
        <id>Q13651</id>
        <label>IL10RA</label>
    </interactant>
    <organismsDiffer>false</organismsDiffer>
    <experiments>3</experiments>
</comment>
<comment type="interaction">
    <interactant intactId="EBI-10191195">
        <id>O95183</id>
    </interactant>
    <interactant intactId="EBI-1757512">
        <id>P26951</id>
        <label>IL3RA</label>
    </interactant>
    <organismsDiffer>false</organismsDiffer>
    <experiments>3</experiments>
</comment>
<comment type="interaction">
    <interactant intactId="EBI-10191195">
        <id>O95183</id>
    </interactant>
    <interactant intactId="EBI-80490">
        <id>P16871</id>
        <label>IL7R</label>
    </interactant>
    <organismsDiffer>false</organismsDiffer>
    <experiments>3</experiments>
</comment>
<comment type="interaction">
    <interactant intactId="EBI-10191195">
        <id>O95183</id>
    </interactant>
    <interactant intactId="EBI-10266796">
        <id>Q8N5M9</id>
        <label>JAGN1</label>
    </interactant>
    <organismsDiffer>false</organismsDiffer>
    <experiments>3</experiments>
</comment>
<comment type="interaction">
    <interactant intactId="EBI-10191195">
        <id>O95183</id>
    </interactant>
    <interactant intactId="EBI-8632435">
        <id>P43628</id>
        <label>KIR2DL3</label>
    </interactant>
    <organismsDiffer>false</organismsDiffer>
    <experiments>3</experiments>
</comment>
<comment type="interaction">
    <interactant intactId="EBI-10191195">
        <id>O95183</id>
    </interactant>
    <interactant intactId="EBI-17272405">
        <id>Q8N743</id>
        <label>KIR3DL3</label>
    </interactant>
    <organismsDiffer>false</organismsDiffer>
    <experiments>3</experiments>
</comment>
<comment type="interaction">
    <interactant intactId="EBI-10191195">
        <id>O95183</id>
    </interactant>
    <interactant intactId="EBI-9018187">
        <id>P26715</id>
        <label>KLRC1</label>
    </interactant>
    <organismsDiffer>false</organismsDiffer>
    <experiments>3</experiments>
</comment>
<comment type="interaction">
    <interactant intactId="EBI-10191195">
        <id>O95183</id>
    </interactant>
    <interactant intactId="EBI-354956">
        <id>Q08380</id>
        <label>LGALS3BP</label>
    </interactant>
    <organismsDiffer>false</organismsDiffer>
    <experiments>2</experiments>
</comment>
<comment type="interaction">
    <interactant intactId="EBI-10191195">
        <id>O95183</id>
    </interactant>
    <interactant intactId="EBI-11304917">
        <id>Q8N386</id>
        <label>LRRC25</label>
    </interactant>
    <organismsDiffer>false</organismsDiffer>
    <experiments>3</experiments>
</comment>
<comment type="interaction">
    <interactant intactId="EBI-10191195">
        <id>O95183</id>
    </interactant>
    <interactant intactId="EBI-17263240">
        <id>P15941-11</id>
        <label>MUC1</label>
    </interactant>
    <organismsDiffer>false</organismsDiffer>
    <experiments>3</experiments>
</comment>
<comment type="interaction">
    <interactant intactId="EBI-10191195">
        <id>O95183</id>
    </interactant>
    <interactant intactId="EBI-10247000">
        <id>Q6IBW4-4</id>
        <label>NCAPH2</label>
    </interactant>
    <organismsDiffer>false</organismsDiffer>
    <experiments>3</experiments>
</comment>
<comment type="interaction">
    <interactant intactId="EBI-10191195">
        <id>O95183</id>
    </interactant>
    <interactant intactId="EBI-7037612">
        <id>Q96RD7</id>
        <label>PANX1</label>
    </interactant>
    <organismsDiffer>false</organismsDiffer>
    <experiments>3</experiments>
</comment>
<comment type="interaction">
    <interactant intactId="EBI-10191195">
        <id>O95183</id>
    </interactant>
    <interactant intactId="EBI-3919694">
        <id>P15151</id>
        <label>PVR</label>
    </interactant>
    <organismsDiffer>false</organismsDiffer>
    <experiments>3</experiments>
</comment>
<comment type="interaction">
    <interactant intactId="EBI-10191195">
        <id>O95183</id>
    </interactant>
    <interactant intactId="EBI-7545592">
        <id>Q9H6H4</id>
        <label>REEP4</label>
    </interactant>
    <organismsDiffer>false</organismsDiffer>
    <experiments>3</experiments>
</comment>
<comment type="interaction">
    <interactant intactId="EBI-10191195">
        <id>O95183</id>
    </interactant>
    <interactant intactId="EBI-10192441">
        <id>Q86VR2</id>
        <label>RETREG3</label>
    </interactant>
    <organismsDiffer>false</organismsDiffer>
    <experiments>3</experiments>
</comment>
<comment type="interaction">
    <interactant intactId="EBI-10191195">
        <id>O95183</id>
    </interactant>
    <interactant intactId="EBI-3920694">
        <id>Q9NR31</id>
        <label>SAR1A</label>
    </interactant>
    <organismsDiffer>false</organismsDiffer>
    <experiments>3</experiments>
</comment>
<comment type="interaction">
    <interactant intactId="EBI-10191195">
        <id>O95183</id>
    </interactant>
    <interactant intactId="EBI-10204280">
        <id>A0A0S2Z4U3</id>
        <label>SDC3</label>
    </interactant>
    <organismsDiffer>false</organismsDiffer>
    <experiments>3</experiments>
</comment>
<comment type="interaction">
    <interactant intactId="EBI-10191195">
        <id>O95183</id>
    </interactant>
    <interactant intactId="EBI-2855401">
        <id>Q9BY50</id>
        <label>SEC11C</label>
    </interactant>
    <organismsDiffer>false</organismsDiffer>
    <experiments>3</experiments>
</comment>
<comment type="interaction">
    <interactant intactId="EBI-10191195">
        <id>O95183</id>
    </interactant>
    <interactant intactId="EBI-1573290">
        <id>Q15849</id>
        <label>SLC14A2</label>
    </interactant>
    <organismsDiffer>false</organismsDiffer>
    <experiments>3</experiments>
</comment>
<comment type="interaction">
    <interactant intactId="EBI-10191195">
        <id>O95183</id>
    </interactant>
    <interactant intactId="EBI-17595455">
        <id>P54219-3</id>
        <label>SLC18A1</label>
    </interactant>
    <organismsDiffer>false</organismsDiffer>
    <experiments>3</experiments>
</comment>
<comment type="interaction">
    <interactant intactId="EBI-10191195">
        <id>O95183</id>
    </interactant>
    <interactant intactId="EBI-12898013">
        <id>Q9NP94</id>
        <label>SLC39A2</label>
    </interactant>
    <organismsDiffer>false</organismsDiffer>
    <experiments>3</experiments>
</comment>
<comment type="interaction">
    <interactant intactId="EBI-10191195">
        <id>O95183</id>
    </interactant>
    <interactant intactId="EBI-10188497">
        <id>A8K287</id>
        <label>SNAP23</label>
    </interactant>
    <organismsDiffer>false</organismsDiffer>
    <experiments>3</experiments>
</comment>
<comment type="interaction">
    <interactant intactId="EBI-10191195">
        <id>O95183</id>
    </interactant>
    <interactant intactId="EBI-490676">
        <id>O95721</id>
        <label>SNAP29</label>
    </interactant>
    <organismsDiffer>false</organismsDiffer>
    <experiments>11</experiments>
</comment>
<comment type="interaction">
    <interactant intactId="EBI-10191195">
        <id>O95183</id>
    </interactant>
    <interactant intactId="EBI-1057058">
        <id>Q99523</id>
        <label>SORT1</label>
    </interactant>
    <organismsDiffer>false</organismsDiffer>
    <experiments>3</experiments>
</comment>
<comment type="interaction">
    <interactant intactId="EBI-10191195">
        <id>O95183</id>
    </interactant>
    <interactant intactId="EBI-12078338">
        <id>O43278-2</id>
        <label>SPINT1</label>
    </interactant>
    <organismsDiffer>false</organismsDiffer>
    <experiments>3</experiments>
</comment>
<comment type="interaction">
    <interactant intactId="EBI-10191195">
        <id>O95183</id>
    </interactant>
    <interactant intactId="EBI-2853548">
        <id>O14662</id>
        <label>STX16</label>
    </interactant>
    <organismsDiffer>false</organismsDiffer>
    <experiments>5</experiments>
</comment>
<comment type="interaction">
    <interactant intactId="EBI-10191195">
        <id>O95183</id>
    </interactant>
    <interactant intactId="EBI-9089968">
        <id>O14662-5</id>
        <label>STX16</label>
    </interactant>
    <organismsDiffer>false</organismsDiffer>
    <experiments>3</experiments>
</comment>
<comment type="interaction">
    <interactant intactId="EBI-10191195">
        <id>O95183</id>
    </interactant>
    <interactant intactId="EBI-712466">
        <id>Q16623</id>
        <label>STX1A</label>
    </interactant>
    <organismsDiffer>false</organismsDiffer>
    <experiments>3</experiments>
</comment>
<comment type="interaction">
    <interactant intactId="EBI-10191195">
        <id>O95183</id>
    </interactant>
    <interactant intactId="EBI-9071709">
        <id>P61266</id>
        <label>STX1B</label>
    </interactant>
    <organismsDiffer>false</organismsDiffer>
    <experiments>3</experiments>
</comment>
<comment type="interaction">
    <interactant intactId="EBI-10191195">
        <id>O95183</id>
    </interactant>
    <interactant intactId="EBI-11956649">
        <id>P32856-2</id>
        <label>STX2</label>
    </interactant>
    <organismsDiffer>false</organismsDiffer>
    <experiments>3</experiments>
</comment>
<comment type="interaction">
    <interactant intactId="EBI-10191195">
        <id>O95183</id>
    </interactant>
    <interactant intactId="EBI-744942">
        <id>Q12846</id>
        <label>STX4</label>
    </interactant>
    <organismsDiffer>false</organismsDiffer>
    <experiments>9</experiments>
</comment>
<comment type="interaction">
    <interactant intactId="EBI-10191195">
        <id>O95183</id>
    </interactant>
    <interactant intactId="EBI-714206">
        <id>Q13190</id>
        <label>STX5</label>
    </interactant>
    <organismsDiffer>false</organismsDiffer>
    <experiments>6</experiments>
</comment>
<comment type="interaction">
    <interactant intactId="EBI-10191195">
        <id>O95183</id>
    </interactant>
    <interactant intactId="EBI-727240">
        <id>Q9UNK0</id>
        <label>STX8</label>
    </interactant>
    <organismsDiffer>false</organismsDiffer>
    <experiments>6</experiments>
</comment>
<comment type="interaction">
    <interactant intactId="EBI-10191195">
        <id>O95183</id>
    </interactant>
    <interactant intactId="EBI-17933167">
        <id>Q9NYW4</id>
        <label>TAS2R5</label>
    </interactant>
    <organismsDiffer>false</organismsDiffer>
    <experiments>3</experiments>
</comment>
<comment type="interaction">
    <interactant intactId="EBI-10191195">
        <id>O95183</id>
    </interactant>
    <interactant intactId="EBI-13351685">
        <id>Q96CE8</id>
        <label>TM4SF18</label>
    </interactant>
    <organismsDiffer>false</organismsDiffer>
    <experiments>3</experiments>
</comment>
<comment type="interaction">
    <interactant intactId="EBI-10191195">
        <id>O95183</id>
    </interactant>
    <interactant intactId="EBI-12821895">
        <id>Q8N6Q1</id>
        <label>TMCO5A</label>
    </interactant>
    <organismsDiffer>false</organismsDiffer>
    <experiments>3</experiments>
</comment>
<comment type="interaction">
    <interactant intactId="EBI-10191195">
        <id>O95183</id>
    </interactant>
    <interactant intactId="EBI-2821497">
        <id>Q9BVX2</id>
        <label>TMEM106C</label>
    </interactant>
    <organismsDiffer>false</organismsDiffer>
    <experiments>3</experiments>
</comment>
<comment type="interaction">
    <interactant intactId="EBI-10191195">
        <id>O95183</id>
    </interactant>
    <interactant intactId="EBI-7238458">
        <id>Q8IV31</id>
        <label>TMEM139</label>
    </interactant>
    <organismsDiffer>false</organismsDiffer>
    <experiments>3</experiments>
</comment>
<comment type="interaction">
    <interactant intactId="EBI-10191195">
        <id>O95183</id>
    </interactant>
    <interactant intactId="EBI-8638294">
        <id>Q9NUH8</id>
        <label>TMEM14B</label>
    </interactant>
    <organismsDiffer>false</organismsDiffer>
    <experiments>3</experiments>
</comment>
<comment type="interaction">
    <interactant intactId="EBI-10191195">
        <id>O95183</id>
    </interactant>
    <interactant intactId="EBI-3923061">
        <id>Q96B21</id>
        <label>TMEM45B</label>
    </interactant>
    <organismsDiffer>false</organismsDiffer>
    <experiments>3</experiments>
</comment>
<comment type="interaction">
    <interactant intactId="EBI-10191195">
        <id>O95183</id>
    </interactant>
    <interactant intactId="EBI-18178701">
        <id>Q4KMG9</id>
        <label>TMEM52B</label>
    </interactant>
    <organismsDiffer>false</organismsDiffer>
    <experiments>3</experiments>
</comment>
<comment type="interaction">
    <interactant intactId="EBI-10191195">
        <id>O95183</id>
    </interactant>
    <interactant intactId="EBI-2548832">
        <id>Q8N661</id>
        <label>TMEM86B</label>
    </interactant>
    <organismsDiffer>false</organismsDiffer>
    <experiments>3</experiments>
</comment>
<comment type="interaction">
    <interactant intactId="EBI-10191195">
        <id>O95183</id>
    </interactant>
    <interactant intactId="EBI-12345267">
        <id>O15393-2</id>
        <label>TMPRSS2</label>
    </interactant>
    <organismsDiffer>false</organismsDiffer>
    <experiments>3</experiments>
</comment>
<comment type="interaction">
    <interactant intactId="EBI-10191195">
        <id>O95183</id>
    </interactant>
    <interactant intactId="EBI-6447886">
        <id>Q9Y320</id>
        <label>TMX2</label>
    </interactant>
    <organismsDiffer>false</organismsDiffer>
    <experiments>3</experiments>
</comment>
<comment type="interaction">
    <interactant intactId="EBI-10191195">
        <id>O95183</id>
    </interactant>
    <interactant intactId="EBI-903131">
        <id>Q9Y279</id>
        <label>VSIG4</label>
    </interactant>
    <organismsDiffer>false</organismsDiffer>
    <experiments>3</experiments>
</comment>
<comment type="interaction">
    <interactant intactId="EBI-10191195">
        <id>O95183</id>
    </interactant>
    <interactant intactId="EBI-12837904">
        <id>Q96MV8</id>
        <label>ZDHHC15</label>
    </interactant>
    <organismsDiffer>false</organismsDiffer>
    <experiments>3</experiments>
</comment>
<comment type="subcellular location">
    <subcellularLocation>
        <location evidence="7">Cell membrane</location>
        <topology evidence="7">Single-pass type IV membrane protein</topology>
    </subcellularLocation>
    <subcellularLocation>
        <location evidence="7">Endomembrane system</location>
        <topology evidence="7">Single-pass type IV membrane protein</topology>
    </subcellularLocation>
    <subcellularLocation>
        <location evidence="7">Golgi apparatus</location>
        <location evidence="7">trans-Golgi network membrane</location>
        <topology evidence="7">Single-pass type IV membrane protein</topology>
    </subcellularLocation>
    <text evidence="1">Associated with the plasma membrane as well as intracellular perinuclear and peripheral vesicular structures of myotubes. Associated with the trans-Golgi, but not with the cis-Golgi apparatus (By similarity).</text>
</comment>
<comment type="induction">
    <text>During myogenesis.</text>
</comment>
<comment type="PTM">
    <text evidence="6">(Microbial infection) Targeted and hydrolyzed by C.botulinum neurotoxin type X (BoNT/X) which hydrolyzes the 40-Arg-|-Ser-41 bond and probably inhibits neurotransmitter release (PubMed:28770820). It remains unknown whether BoNT/X is ever produced, or what organisms it targets.</text>
</comment>
<comment type="similarity">
    <text evidence="7">Belongs to the synaptobrevin family.</text>
</comment>
<accession>O95183</accession>
<accession>Q9P0T2</accession>
<feature type="chain" id="PRO_0000206733" description="Vesicle-associated membrane protein 5">
    <location>
        <begin position="1"/>
        <end position="116"/>
    </location>
</feature>
<feature type="topological domain" description="Cytoplasmic" evidence="3">
    <location>
        <begin position="1"/>
        <end position="72"/>
    </location>
</feature>
<feature type="transmembrane region" description="Helical; Anchor for type IV membrane protein" evidence="3">
    <location>
        <begin position="73"/>
        <end position="93"/>
    </location>
</feature>
<feature type="topological domain" description="Vesicular" evidence="3">
    <location>
        <begin position="94"/>
        <end position="116"/>
    </location>
</feature>
<feature type="domain" description="v-SNARE coiled-coil homology" evidence="4">
    <location>
        <begin position="5"/>
        <end position="65"/>
    </location>
</feature>
<feature type="region of interest" description="Disordered" evidence="5">
    <location>
        <begin position="96"/>
        <end position="116"/>
    </location>
</feature>
<feature type="site" description="(Microbial infection) Cleavage; by C.botulinum neurotoxin type X (BoNT/X)" evidence="6">
    <location>
        <begin position="40"/>
        <end position="41"/>
    </location>
</feature>
<feature type="modified residue" description="Phosphoserine" evidence="2">
    <location>
        <position position="41"/>
    </location>
</feature>
<feature type="modified residue" description="Phosphoserine" evidence="8">
    <location>
        <position position="48"/>
    </location>
</feature>
<feature type="modified residue" description="Phosphoserine" evidence="8">
    <location>
        <position position="49"/>
    </location>
</feature>
<feature type="sequence conflict" description="In Ref. 2; AAF36111." evidence="7" ref="2">
    <original>T</original>
    <variation>M</variation>
    <location>
        <position position="17"/>
    </location>
</feature>
<gene>
    <name type="primary">VAMP5</name>
    <name type="ORF">HSPC191</name>
</gene>
<evidence type="ECO:0000250" key="1"/>
<evidence type="ECO:0000250" key="2">
    <source>
        <dbReference type="UniProtKB" id="Q9Z2P8"/>
    </source>
</evidence>
<evidence type="ECO:0000255" key="3"/>
<evidence type="ECO:0000255" key="4">
    <source>
        <dbReference type="PROSITE-ProRule" id="PRU00290"/>
    </source>
</evidence>
<evidence type="ECO:0000256" key="5">
    <source>
        <dbReference type="SAM" id="MobiDB-lite"/>
    </source>
</evidence>
<evidence type="ECO:0000269" key="6">
    <source>
    </source>
</evidence>
<evidence type="ECO:0000305" key="7"/>
<evidence type="ECO:0007744" key="8">
    <source>
    </source>
</evidence>
<dbReference type="EMBL" id="AF054825">
    <property type="protein sequence ID" value="AAC97473.1"/>
    <property type="molecule type" value="mRNA"/>
</dbReference>
<dbReference type="EMBL" id="AF077197">
    <property type="protein sequence ID" value="AAD26992.1"/>
    <property type="molecule type" value="mRNA"/>
</dbReference>
<dbReference type="EMBL" id="AF151025">
    <property type="protein sequence ID" value="AAF36111.1"/>
    <property type="molecule type" value="mRNA"/>
</dbReference>
<dbReference type="EMBL" id="BC017891">
    <property type="protein sequence ID" value="AAH17891.1"/>
    <property type="molecule type" value="mRNA"/>
</dbReference>
<dbReference type="CCDS" id="CCDS1980.1"/>
<dbReference type="RefSeq" id="NP_006625.1">
    <property type="nucleotide sequence ID" value="NM_006634.3"/>
</dbReference>
<dbReference type="SMR" id="O95183"/>
<dbReference type="BioGRID" id="116007">
    <property type="interactions" value="171"/>
</dbReference>
<dbReference type="FunCoup" id="O95183">
    <property type="interactions" value="160"/>
</dbReference>
<dbReference type="IntAct" id="O95183">
    <property type="interactions" value="177"/>
</dbReference>
<dbReference type="MINT" id="O95183"/>
<dbReference type="STRING" id="9606.ENSP00000305647"/>
<dbReference type="iPTMnet" id="O95183"/>
<dbReference type="MetOSite" id="O95183"/>
<dbReference type="PhosphoSitePlus" id="O95183"/>
<dbReference type="SwissPalm" id="O95183"/>
<dbReference type="BioMuta" id="VAMP5"/>
<dbReference type="jPOST" id="O95183"/>
<dbReference type="MassIVE" id="O95183"/>
<dbReference type="PaxDb" id="9606-ENSP00000305647"/>
<dbReference type="PeptideAtlas" id="O95183"/>
<dbReference type="ProteomicsDB" id="50693"/>
<dbReference type="Antibodypedia" id="31895">
    <property type="antibodies" value="169 antibodies from 25 providers"/>
</dbReference>
<dbReference type="DNASU" id="10791"/>
<dbReference type="Ensembl" id="ENST00000306384.5">
    <property type="protein sequence ID" value="ENSP00000305647.4"/>
    <property type="gene ID" value="ENSG00000168899.5"/>
</dbReference>
<dbReference type="GeneID" id="10791"/>
<dbReference type="KEGG" id="hsa:10791"/>
<dbReference type="MANE-Select" id="ENST00000306384.5">
    <property type="protein sequence ID" value="ENSP00000305647.4"/>
    <property type="RefSeq nucleotide sequence ID" value="NM_006634.3"/>
    <property type="RefSeq protein sequence ID" value="NP_006625.1"/>
</dbReference>
<dbReference type="AGR" id="HGNC:12646"/>
<dbReference type="CTD" id="10791"/>
<dbReference type="DisGeNET" id="10791"/>
<dbReference type="GeneCards" id="VAMP5"/>
<dbReference type="HGNC" id="HGNC:12646">
    <property type="gene designation" value="VAMP5"/>
</dbReference>
<dbReference type="HPA" id="ENSG00000168899">
    <property type="expression patterns" value="Low tissue specificity"/>
</dbReference>
<dbReference type="MIM" id="607029">
    <property type="type" value="gene"/>
</dbReference>
<dbReference type="neXtProt" id="NX_O95183"/>
<dbReference type="OpenTargets" id="ENSG00000168899"/>
<dbReference type="PharmGKB" id="PA37270"/>
<dbReference type="VEuPathDB" id="HostDB:ENSG00000168899"/>
<dbReference type="eggNOG" id="KOG0860">
    <property type="taxonomic scope" value="Eukaryota"/>
</dbReference>
<dbReference type="GeneTree" id="ENSGT00730000111371"/>
<dbReference type="HOGENOM" id="CLU_064620_4_2_1"/>
<dbReference type="InParanoid" id="O95183"/>
<dbReference type="OMA" id="VRCRIYL"/>
<dbReference type="OrthoDB" id="190375at2759"/>
<dbReference type="PAN-GO" id="O95183">
    <property type="GO annotations" value="2 GO annotations based on evolutionary models"/>
</dbReference>
<dbReference type="PhylomeDB" id="O95183"/>
<dbReference type="TreeFam" id="TF313666"/>
<dbReference type="PathwayCommons" id="O95183"/>
<dbReference type="SignaLink" id="O95183"/>
<dbReference type="BioGRID-ORCS" id="10791">
    <property type="hits" value="9 hits in 1159 CRISPR screens"/>
</dbReference>
<dbReference type="ChiTaRS" id="VAMP5">
    <property type="organism name" value="human"/>
</dbReference>
<dbReference type="GenomeRNAi" id="10791"/>
<dbReference type="Pharos" id="O95183">
    <property type="development level" value="Tbio"/>
</dbReference>
<dbReference type="PRO" id="PR:O95183"/>
<dbReference type="Proteomes" id="UP000005640">
    <property type="component" value="Chromosome 2"/>
</dbReference>
<dbReference type="RNAct" id="O95183">
    <property type="molecule type" value="protein"/>
</dbReference>
<dbReference type="Bgee" id="ENSG00000168899">
    <property type="expression patterns" value="Expressed in right lung and 175 other cell types or tissues"/>
</dbReference>
<dbReference type="ExpressionAtlas" id="O95183">
    <property type="expression patterns" value="baseline and differential"/>
</dbReference>
<dbReference type="GO" id="GO:0009986">
    <property type="term" value="C:cell surface"/>
    <property type="evidence" value="ECO:0000314"/>
    <property type="project" value="BHF-UCL"/>
</dbReference>
<dbReference type="GO" id="GO:0030659">
    <property type="term" value="C:cytoplasmic vesicle membrane"/>
    <property type="evidence" value="ECO:0000250"/>
    <property type="project" value="BHF-UCL"/>
</dbReference>
<dbReference type="GO" id="GO:0070062">
    <property type="term" value="C:extracellular exosome"/>
    <property type="evidence" value="ECO:0007005"/>
    <property type="project" value="UniProtKB"/>
</dbReference>
<dbReference type="GO" id="GO:0014704">
    <property type="term" value="C:intercalated disc"/>
    <property type="evidence" value="ECO:0007669"/>
    <property type="project" value="Ensembl"/>
</dbReference>
<dbReference type="GO" id="GO:0005770">
    <property type="term" value="C:late endosome"/>
    <property type="evidence" value="ECO:0000250"/>
    <property type="project" value="BHF-UCL"/>
</dbReference>
<dbReference type="GO" id="GO:0031090">
    <property type="term" value="C:organelle membrane"/>
    <property type="evidence" value="ECO:0000250"/>
    <property type="project" value="BHF-UCL"/>
</dbReference>
<dbReference type="GO" id="GO:0048471">
    <property type="term" value="C:perinuclear region of cytoplasm"/>
    <property type="evidence" value="ECO:0000250"/>
    <property type="project" value="BHF-UCL"/>
</dbReference>
<dbReference type="GO" id="GO:0005886">
    <property type="term" value="C:plasma membrane"/>
    <property type="evidence" value="ECO:0000318"/>
    <property type="project" value="GO_Central"/>
</dbReference>
<dbReference type="GO" id="GO:0005802">
    <property type="term" value="C:trans-Golgi network"/>
    <property type="evidence" value="ECO:0007669"/>
    <property type="project" value="Ensembl"/>
</dbReference>
<dbReference type="GO" id="GO:0030154">
    <property type="term" value="P:cell differentiation"/>
    <property type="evidence" value="ECO:0007669"/>
    <property type="project" value="UniProtKB-KW"/>
</dbReference>
<dbReference type="GO" id="GO:0043001">
    <property type="term" value="P:Golgi to plasma membrane protein transport"/>
    <property type="evidence" value="ECO:0000318"/>
    <property type="project" value="GO_Central"/>
</dbReference>
<dbReference type="GO" id="GO:0007517">
    <property type="term" value="P:muscle organ development"/>
    <property type="evidence" value="ECO:0000304"/>
    <property type="project" value="ProtInc"/>
</dbReference>
<dbReference type="GO" id="GO:0007519">
    <property type="term" value="P:skeletal muscle tissue development"/>
    <property type="evidence" value="ECO:0007669"/>
    <property type="project" value="Ensembl"/>
</dbReference>
<dbReference type="CDD" id="cd15872">
    <property type="entry name" value="R-SNARE_VAMP5"/>
    <property type="match status" value="1"/>
</dbReference>
<dbReference type="FunFam" id="1.20.5.110:FF:000064">
    <property type="entry name" value="Vesicle associated membrane protein 5"/>
    <property type="match status" value="1"/>
</dbReference>
<dbReference type="Gene3D" id="1.20.5.110">
    <property type="match status" value="1"/>
</dbReference>
<dbReference type="InterPro" id="IPR001388">
    <property type="entry name" value="Synaptobrevin-like"/>
</dbReference>
<dbReference type="InterPro" id="IPR042855">
    <property type="entry name" value="V_SNARE_CC"/>
</dbReference>
<dbReference type="InterPro" id="IPR042166">
    <property type="entry name" value="Vamp5"/>
</dbReference>
<dbReference type="InterPro" id="IPR042581">
    <property type="entry name" value="VAMP5_R-SNARE"/>
</dbReference>
<dbReference type="PANTHER" id="PTHR47462">
    <property type="entry name" value="VESICLE-ASSOCIATED MEMBRANE PROTEIN 5"/>
    <property type="match status" value="1"/>
</dbReference>
<dbReference type="PANTHER" id="PTHR47462:SF1">
    <property type="entry name" value="VESICLE-ASSOCIATED MEMBRANE PROTEIN 5"/>
    <property type="match status" value="1"/>
</dbReference>
<dbReference type="Pfam" id="PF00957">
    <property type="entry name" value="Synaptobrevin"/>
    <property type="match status" value="1"/>
</dbReference>
<dbReference type="PRINTS" id="PR00219">
    <property type="entry name" value="SYNAPTOBREVN"/>
</dbReference>
<dbReference type="SUPFAM" id="SSF58038">
    <property type="entry name" value="SNARE fusion complex"/>
    <property type="match status" value="1"/>
</dbReference>
<dbReference type="PROSITE" id="PS00417">
    <property type="entry name" value="SYNAPTOBREVIN"/>
    <property type="match status" value="1"/>
</dbReference>
<dbReference type="PROSITE" id="PS50892">
    <property type="entry name" value="V_SNARE"/>
    <property type="match status" value="1"/>
</dbReference>
<name>VAMP5_HUMAN</name>